<evidence type="ECO:0000255" key="1">
    <source>
        <dbReference type="PROSITE-ProRule" id="PRU00981"/>
    </source>
</evidence>
<evidence type="ECO:0000256" key="2">
    <source>
        <dbReference type="SAM" id="MobiDB-lite"/>
    </source>
</evidence>
<evidence type="ECO:0000269" key="3">
    <source>
    </source>
</evidence>
<evidence type="ECO:0000269" key="4">
    <source>
    </source>
</evidence>
<evidence type="ECO:0000269" key="5">
    <source>
    </source>
</evidence>
<evidence type="ECO:0000269" key="6">
    <source>
    </source>
</evidence>
<evidence type="ECO:0000269" key="7">
    <source>
    </source>
</evidence>
<evidence type="ECO:0000269" key="8">
    <source>
    </source>
</evidence>
<evidence type="ECO:0000269" key="9">
    <source>
    </source>
</evidence>
<evidence type="ECO:0000305" key="10"/>
<name>PTF1A_MOUSE</name>
<sequence length="324" mass="35185">MDAVLLEHFPGGLDTFPSPYFDEEDFFTDQSSRDPLEDSDELLGDEQAEVEFLSHQLHEYCYRDGACLLLQPAPSAAPHALAPPPLGDPGEPEDNVSYCCDAGAPLAAFPYSPGSPPSCLAYPCAAVLSPGARLGGLNGAAAAAAARRRRRVRSEAELQQLRQAANVRERRRMQSINDAFEGLRSHIPTLPYEKRLSKVDTLRLAIGYINFLSELVQADLPLRGSGAGGCGGPGGSRHLGEDSPGNQAQKVIICHRGTRSPSPSDPDYGLPPLAGHSLSWTDEKQLKEQNIIRTAKVWTPEDPRKLNSKSFDNIENEPPFEFVS</sequence>
<protein>
    <recommendedName>
        <fullName>Pancreas transcription factor 1 subunit alpha</fullName>
    </recommendedName>
    <alternativeName>
        <fullName>Pancreas-specific transcription factor 1a</fullName>
    </alternativeName>
    <alternativeName>
        <fullName>bHLH transcription factor p48</fullName>
    </alternativeName>
    <alternativeName>
        <fullName>p48 DNA-binding subunit of transcription factor PTF1</fullName>
        <shortName>PTF1-p48</shortName>
    </alternativeName>
</protein>
<accession>Q9QX98</accession>
<accession>Q9QYF5</accession>
<accession>Q9QYF6</accession>
<comment type="function">
    <text evidence="4 5 6 7 8 9">Transcription factor implicated in the cell fate determination in various organs (PubMed:11562365, PubMed:12185368, PubMed:15543146, PubMed:17075007, PubMed:9851981). Binds to the E-box consensus sequence 5'-CANNTG-3' (PubMed:11562365, PubMed:12185368, PubMed:9851981). Plays a role in early and late pancreas development and differentiation (PubMed:11562365, PubMed:21852532). Important for determining whether cells allocated to the pancreatic buds continue towards pancreatic organogenesis or revert back to duodenal fates (PubMed:11562365, PubMed:12185368, PubMed:9851981). May be involved in the maintenance of exocrine pancreas-specific gene expression including ELA1 and amylase (PubMed:11562365, PubMed:12185368, PubMed:9851981). Required for the formation of pancreatic acinar and ductal cells (PubMed:11562365). Plays an important role in cerebellar development (PubMed:15543146). Directly regulated by FOXN4 and RORC during retinal development, FOXN4-PTF1A pathway plays a central role in directing the differentiation of retinal progenitors towards horizontal and amacrine fates (PubMed:17075007).</text>
</comment>
<comment type="subunit">
    <text evidence="3 4">Component of the pancreas transcription factor 1 complex (PTF1) which is composed of TCF3/p75, TCF12/p64 and PTF1A/p48. TCF3 is responsible for the nuclear import of the p48/p64 complex. Interacts with TCF3 and RBPSUH/RBP-Jkappa.</text>
</comment>
<comment type="subcellular location">
    <subcellularLocation>
        <location>Nucleus</location>
    </subcellularLocation>
    <subcellularLocation>
        <location>Cytoplasm</location>
    </subcellularLocation>
    <text>In the cytoplasm loses its ability to form the PTF1 complex.</text>
</comment>
<comment type="tissue specificity">
    <text evidence="9">Expressed in precursors of pancreatic islets, acini and ducts.</text>
</comment>
<comment type="developmental stage">
    <text evidence="3 5 6 7">Expressed at an early stage of pancreas development, shortly after the onset of endodermal budding that forms the pancreatic anlage. In 9.5 dpc embryo, expression is in the myelencephalon and the neural tube at the cervical level. In the 10.5 dpc embryo expression expands as a thin stripe to the posterior end of the neural tube. The central nervous system anterior to the myelencephalon is devoid of expression at this stage. In 12-12.5 dpc embryo, expression expands anteriorly to the cerebellum region. During retinogenesis, restricted to postmitotic neuronal precursor population in the ventricular zone of the developing retina. Not expressed before 12.5 dpc when is detected in the central region of the retina. By 14.5, expands from the center to the entire retina. Between 16.5 dpc and P1, continues to be expressed strongly in a subset of cells within the outer neuroblastic layer. Expression begins to be down-regulated by P2 and is undetectable in retinas from P6.</text>
</comment>
<comment type="disruption phenotype">
    <text evidence="6 7 9">Early postnatal lethal phenotype characterized by a lack of the exocrine pancreas, however, islet-like endocrine cell clusters are formed. A redirection of pancreatic precursors to intestinal fates is seen. At 16.5 dpc embryos show reduced size of cerebellar primordium and cerebellar aplasia.</text>
</comment>
<gene>
    <name type="primary">Ptf1a</name>
    <name type="synonym">Ptf1p48</name>
</gene>
<dbReference type="EMBL" id="AB035674">
    <property type="protein sequence ID" value="BAA88247.1"/>
    <property type="molecule type" value="Genomic_DNA"/>
</dbReference>
<dbReference type="EMBL" id="AB035675">
    <property type="protein sequence ID" value="BAA88249.1"/>
    <property type="molecule type" value="mRNA"/>
</dbReference>
<dbReference type="EMBL" id="AF298116">
    <property type="protein sequence ID" value="AAG31604.1"/>
    <property type="molecule type" value="Genomic_DNA"/>
</dbReference>
<dbReference type="EMBL" id="AJ252156">
    <property type="protein sequence ID" value="CAB65273.1"/>
    <property type="molecule type" value="Genomic_DNA"/>
</dbReference>
<dbReference type="EMBL" id="AK007922">
    <property type="protein sequence ID" value="BAE43208.1"/>
    <property type="molecule type" value="mRNA"/>
</dbReference>
<dbReference type="CCDS" id="CCDS15715.1"/>
<dbReference type="RefSeq" id="NP_061279.2">
    <property type="nucleotide sequence ID" value="NM_018809.2"/>
</dbReference>
<dbReference type="SMR" id="Q9QX98"/>
<dbReference type="BioGRID" id="202451">
    <property type="interactions" value="2"/>
</dbReference>
<dbReference type="CORUM" id="Q9QX98"/>
<dbReference type="FunCoup" id="Q9QX98">
    <property type="interactions" value="1028"/>
</dbReference>
<dbReference type="IntAct" id="Q9QX98">
    <property type="interactions" value="1"/>
</dbReference>
<dbReference type="MINT" id="Q9QX98"/>
<dbReference type="STRING" id="10090.ENSMUSP00000028068"/>
<dbReference type="iPTMnet" id="Q9QX98"/>
<dbReference type="PhosphoSitePlus" id="Q9QX98"/>
<dbReference type="PaxDb" id="10090-ENSMUSP00000028068"/>
<dbReference type="ProteomicsDB" id="301850"/>
<dbReference type="Antibodypedia" id="25762">
    <property type="antibodies" value="412 antibodies from 31 providers"/>
</dbReference>
<dbReference type="DNASU" id="19213"/>
<dbReference type="Ensembl" id="ENSMUST00000028068.3">
    <property type="protein sequence ID" value="ENSMUSP00000028068.3"/>
    <property type="gene ID" value="ENSMUSG00000026735.3"/>
</dbReference>
<dbReference type="GeneID" id="19213"/>
<dbReference type="KEGG" id="mmu:19213"/>
<dbReference type="UCSC" id="uc012brh.1">
    <property type="organism name" value="mouse"/>
</dbReference>
<dbReference type="AGR" id="MGI:1328312"/>
<dbReference type="CTD" id="256297"/>
<dbReference type="MGI" id="MGI:1328312">
    <property type="gene designation" value="Ptf1a"/>
</dbReference>
<dbReference type="VEuPathDB" id="HostDB:ENSMUSG00000026735"/>
<dbReference type="eggNOG" id="KOG4029">
    <property type="taxonomic scope" value="Eukaryota"/>
</dbReference>
<dbReference type="GeneTree" id="ENSGT00940000161000"/>
<dbReference type="HOGENOM" id="CLU_053709_0_0_1"/>
<dbReference type="InParanoid" id="Q9QX98"/>
<dbReference type="OMA" id="GYCCEAA"/>
<dbReference type="OrthoDB" id="10048995at2759"/>
<dbReference type="PhylomeDB" id="Q9QX98"/>
<dbReference type="TreeFam" id="TF315153"/>
<dbReference type="BioGRID-ORCS" id="19213">
    <property type="hits" value="1 hit in 78 CRISPR screens"/>
</dbReference>
<dbReference type="ChiTaRS" id="Ptf1a">
    <property type="organism name" value="mouse"/>
</dbReference>
<dbReference type="PRO" id="PR:Q9QX98"/>
<dbReference type="Proteomes" id="UP000000589">
    <property type="component" value="Chromosome 2"/>
</dbReference>
<dbReference type="RNAct" id="Q9QX98">
    <property type="molecule type" value="protein"/>
</dbReference>
<dbReference type="Bgee" id="ENSMUSG00000026735">
    <property type="expression patterns" value="Expressed in dorsal pancreas and 43 other cell types or tissues"/>
</dbReference>
<dbReference type="ExpressionAtlas" id="Q9QX98">
    <property type="expression patterns" value="baseline and differential"/>
</dbReference>
<dbReference type="GO" id="GO:0005737">
    <property type="term" value="C:cytoplasm"/>
    <property type="evidence" value="ECO:0000250"/>
    <property type="project" value="HGNC"/>
</dbReference>
<dbReference type="GO" id="GO:0005829">
    <property type="term" value="C:cytosol"/>
    <property type="evidence" value="ECO:0000304"/>
    <property type="project" value="Reactome"/>
</dbReference>
<dbReference type="GO" id="GO:0005654">
    <property type="term" value="C:nucleoplasm"/>
    <property type="evidence" value="ECO:0000304"/>
    <property type="project" value="Reactome"/>
</dbReference>
<dbReference type="GO" id="GO:0005634">
    <property type="term" value="C:nucleus"/>
    <property type="evidence" value="ECO:0000250"/>
    <property type="project" value="HGNC"/>
</dbReference>
<dbReference type="GO" id="GO:0005667">
    <property type="term" value="C:transcription regulator complex"/>
    <property type="evidence" value="ECO:0000314"/>
    <property type="project" value="MGI"/>
</dbReference>
<dbReference type="GO" id="GO:0003682">
    <property type="term" value="F:chromatin binding"/>
    <property type="evidence" value="ECO:0000314"/>
    <property type="project" value="MGI"/>
</dbReference>
<dbReference type="GO" id="GO:0003677">
    <property type="term" value="F:DNA binding"/>
    <property type="evidence" value="ECO:0000314"/>
    <property type="project" value="UniProtKB"/>
</dbReference>
<dbReference type="GO" id="GO:0001228">
    <property type="term" value="F:DNA-binding transcription activator activity, RNA polymerase II-specific"/>
    <property type="evidence" value="ECO:0000314"/>
    <property type="project" value="MGI"/>
</dbReference>
<dbReference type="GO" id="GO:0070888">
    <property type="term" value="F:E-box binding"/>
    <property type="evidence" value="ECO:0000314"/>
    <property type="project" value="MGI"/>
</dbReference>
<dbReference type="GO" id="GO:0046983">
    <property type="term" value="F:protein dimerization activity"/>
    <property type="evidence" value="ECO:0007669"/>
    <property type="project" value="InterPro"/>
</dbReference>
<dbReference type="GO" id="GO:0000978">
    <property type="term" value="F:RNA polymerase II cis-regulatory region sequence-specific DNA binding"/>
    <property type="evidence" value="ECO:0000266"/>
    <property type="project" value="MGI"/>
</dbReference>
<dbReference type="GO" id="GO:0043565">
    <property type="term" value="F:sequence-specific DNA binding"/>
    <property type="evidence" value="ECO:0000314"/>
    <property type="project" value="MGI"/>
</dbReference>
<dbReference type="GO" id="GO:0035881">
    <property type="term" value="P:amacrine cell differentiation"/>
    <property type="evidence" value="ECO:0000315"/>
    <property type="project" value="UniProtKB"/>
</dbReference>
<dbReference type="GO" id="GO:0045165">
    <property type="term" value="P:cell fate commitment"/>
    <property type="evidence" value="ECO:0000315"/>
    <property type="project" value="MGI"/>
</dbReference>
<dbReference type="GO" id="GO:0021953">
    <property type="term" value="P:central nervous system neuron differentiation"/>
    <property type="evidence" value="ECO:0000315"/>
    <property type="project" value="MGI"/>
</dbReference>
<dbReference type="GO" id="GO:0021549">
    <property type="term" value="P:cerebellum development"/>
    <property type="evidence" value="ECO:0000315"/>
    <property type="project" value="UniProtKB"/>
</dbReference>
<dbReference type="GO" id="GO:0031017">
    <property type="term" value="P:exocrine pancreas development"/>
    <property type="evidence" value="ECO:0000315"/>
    <property type="project" value="UniProtKB"/>
</dbReference>
<dbReference type="GO" id="GO:0048699">
    <property type="term" value="P:generation of neurons"/>
    <property type="evidence" value="ECO:0000314"/>
    <property type="project" value="UniProtKB"/>
</dbReference>
<dbReference type="GO" id="GO:0030902">
    <property type="term" value="P:hindbrain development"/>
    <property type="evidence" value="ECO:0000314"/>
    <property type="project" value="UniProtKB"/>
</dbReference>
<dbReference type="GO" id="GO:0048663">
    <property type="term" value="P:neuron fate commitment"/>
    <property type="evidence" value="ECO:0000314"/>
    <property type="project" value="MGI"/>
</dbReference>
<dbReference type="GO" id="GO:0031016">
    <property type="term" value="P:pancreas development"/>
    <property type="evidence" value="ECO:0000315"/>
    <property type="project" value="MGI"/>
</dbReference>
<dbReference type="GO" id="GO:0045893">
    <property type="term" value="P:positive regulation of DNA-templated transcription"/>
    <property type="evidence" value="ECO:0000314"/>
    <property type="project" value="UniProtKB"/>
</dbReference>
<dbReference type="GO" id="GO:0045944">
    <property type="term" value="P:positive regulation of transcription by RNA polymerase II"/>
    <property type="evidence" value="ECO:0000314"/>
    <property type="project" value="MGI"/>
</dbReference>
<dbReference type="GO" id="GO:0006355">
    <property type="term" value="P:regulation of DNA-templated transcription"/>
    <property type="evidence" value="ECO:0000314"/>
    <property type="project" value="UniProtKB"/>
</dbReference>
<dbReference type="GO" id="GO:0061074">
    <property type="term" value="P:regulation of neural retina development"/>
    <property type="evidence" value="ECO:0000315"/>
    <property type="project" value="UniProtKB"/>
</dbReference>
<dbReference type="GO" id="GO:0010842">
    <property type="term" value="P:retina layer formation"/>
    <property type="evidence" value="ECO:0000315"/>
    <property type="project" value="UniProtKB"/>
</dbReference>
<dbReference type="GO" id="GO:0060042">
    <property type="term" value="P:retina morphogenesis in camera-type eye"/>
    <property type="evidence" value="ECO:0000315"/>
    <property type="project" value="MGI"/>
</dbReference>
<dbReference type="GO" id="GO:0048384">
    <property type="term" value="P:retinoic acid receptor signaling pathway"/>
    <property type="evidence" value="ECO:0000314"/>
    <property type="project" value="UniProtKB"/>
</dbReference>
<dbReference type="GO" id="GO:0009888">
    <property type="term" value="P:tissue development"/>
    <property type="evidence" value="ECO:0000250"/>
    <property type="project" value="UniProtKB"/>
</dbReference>
<dbReference type="GO" id="GO:0006366">
    <property type="term" value="P:transcription by RNA polymerase II"/>
    <property type="evidence" value="ECO:0000314"/>
    <property type="project" value="MGI"/>
</dbReference>
<dbReference type="CDD" id="cd11417">
    <property type="entry name" value="bHLH_TS_PTF1A"/>
    <property type="match status" value="1"/>
</dbReference>
<dbReference type="FunFam" id="4.10.280.10:FF:000035">
    <property type="entry name" value="Pancreas-specific transcription factor 1a"/>
    <property type="match status" value="1"/>
</dbReference>
<dbReference type="Gene3D" id="4.10.280.10">
    <property type="entry name" value="Helix-loop-helix DNA-binding domain"/>
    <property type="match status" value="1"/>
</dbReference>
<dbReference type="InterPro" id="IPR011598">
    <property type="entry name" value="bHLH_dom"/>
</dbReference>
<dbReference type="InterPro" id="IPR050283">
    <property type="entry name" value="E-box_TF_Regulators"/>
</dbReference>
<dbReference type="InterPro" id="IPR036638">
    <property type="entry name" value="HLH_DNA-bd_sf"/>
</dbReference>
<dbReference type="PANTHER" id="PTHR23349">
    <property type="entry name" value="BASIC HELIX-LOOP-HELIX TRANSCRIPTION FACTOR, TWIST"/>
    <property type="match status" value="1"/>
</dbReference>
<dbReference type="PANTHER" id="PTHR23349:SF59">
    <property type="entry name" value="PANCREAS TRANSCRIPTION FACTOR 1 SUBUNIT ALPHA"/>
    <property type="match status" value="1"/>
</dbReference>
<dbReference type="Pfam" id="PF00010">
    <property type="entry name" value="HLH"/>
    <property type="match status" value="1"/>
</dbReference>
<dbReference type="SMART" id="SM00353">
    <property type="entry name" value="HLH"/>
    <property type="match status" value="1"/>
</dbReference>
<dbReference type="SUPFAM" id="SSF47459">
    <property type="entry name" value="HLH, helix-loop-helix DNA-binding domain"/>
    <property type="match status" value="1"/>
</dbReference>
<dbReference type="PROSITE" id="PS50888">
    <property type="entry name" value="BHLH"/>
    <property type="match status" value="1"/>
</dbReference>
<organism>
    <name type="scientific">Mus musculus</name>
    <name type="common">Mouse</name>
    <dbReference type="NCBI Taxonomy" id="10090"/>
    <lineage>
        <taxon>Eukaryota</taxon>
        <taxon>Metazoa</taxon>
        <taxon>Chordata</taxon>
        <taxon>Craniata</taxon>
        <taxon>Vertebrata</taxon>
        <taxon>Euteleostomi</taxon>
        <taxon>Mammalia</taxon>
        <taxon>Eutheria</taxon>
        <taxon>Euarchontoglires</taxon>
        <taxon>Glires</taxon>
        <taxon>Rodentia</taxon>
        <taxon>Myomorpha</taxon>
        <taxon>Muroidea</taxon>
        <taxon>Muridae</taxon>
        <taxon>Murinae</taxon>
        <taxon>Mus</taxon>
        <taxon>Mus</taxon>
    </lineage>
</organism>
<proteinExistence type="evidence at protein level"/>
<reference key="1">
    <citation type="journal article" date="2001" name="Genes Cells">
        <title>p48 subunit of mouse PTF1 binds to RBP-Jkappa/CBF-1, the intracellular mediator of Notch signalling, and is expressed in the neural tube of early stage embryos.</title>
        <authorList>
            <person name="Obata J."/>
            <person name="Yano M."/>
            <person name="Mimura H."/>
            <person name="Goto T."/>
            <person name="Nakayama R."/>
            <person name="Mibu Y."/>
            <person name="Oka C."/>
            <person name="Kawaichi M."/>
        </authorList>
    </citation>
    <scope>NUCLEOTIDE SEQUENCE [GENOMIC DNA / MRNA]</scope>
    <scope>DEVELOPMENTAL STAGE</scope>
    <scope>INTERACTION WITH TCF3 AND RBPSUH</scope>
    <source>
        <strain>ICR</strain>
        <tissue>Embryo</tissue>
    </source>
</reference>
<reference key="2">
    <citation type="journal article" date="2001" name="J. Biol. Chem.">
        <title>The role of PTF1-P48 in pancreatic acinar gene expression.</title>
        <authorList>
            <person name="Rose S.D."/>
            <person name="Swift G.H."/>
            <person name="Peyton M.J."/>
            <person name="Hammer R.E."/>
            <person name="MacDonald R.J."/>
        </authorList>
    </citation>
    <scope>NUCLEOTIDE SEQUENCE [GENOMIC DNA]</scope>
    <scope>FUNCTION</scope>
    <scope>INTERACTION WITH TCF12</scope>
    <source>
        <strain>129</strain>
    </source>
</reference>
<reference key="3">
    <citation type="submission" date="2000-01" db="EMBL/GenBank/DDBJ databases">
        <authorList>
            <person name="Wellauer P.K."/>
        </authorList>
    </citation>
    <scope>NUCLEOTIDE SEQUENCE [GENOMIC DNA]</scope>
    <source>
        <strain>129/SvJ</strain>
    </source>
</reference>
<reference key="4">
    <citation type="journal article" date="2005" name="Science">
        <title>The transcriptional landscape of the mammalian genome.</title>
        <authorList>
            <person name="Carninci P."/>
            <person name="Kasukawa T."/>
            <person name="Katayama S."/>
            <person name="Gough J."/>
            <person name="Frith M.C."/>
            <person name="Maeda N."/>
            <person name="Oyama R."/>
            <person name="Ravasi T."/>
            <person name="Lenhard B."/>
            <person name="Wells C."/>
            <person name="Kodzius R."/>
            <person name="Shimokawa K."/>
            <person name="Bajic V.B."/>
            <person name="Brenner S.E."/>
            <person name="Batalov S."/>
            <person name="Forrest A.R."/>
            <person name="Zavolan M."/>
            <person name="Davis M.J."/>
            <person name="Wilming L.G."/>
            <person name="Aidinis V."/>
            <person name="Allen J.E."/>
            <person name="Ambesi-Impiombato A."/>
            <person name="Apweiler R."/>
            <person name="Aturaliya R.N."/>
            <person name="Bailey T.L."/>
            <person name="Bansal M."/>
            <person name="Baxter L."/>
            <person name="Beisel K.W."/>
            <person name="Bersano T."/>
            <person name="Bono H."/>
            <person name="Chalk A.M."/>
            <person name="Chiu K.P."/>
            <person name="Choudhary V."/>
            <person name="Christoffels A."/>
            <person name="Clutterbuck D.R."/>
            <person name="Crowe M.L."/>
            <person name="Dalla E."/>
            <person name="Dalrymple B.P."/>
            <person name="de Bono B."/>
            <person name="Della Gatta G."/>
            <person name="di Bernardo D."/>
            <person name="Down T."/>
            <person name="Engstrom P."/>
            <person name="Fagiolini M."/>
            <person name="Faulkner G."/>
            <person name="Fletcher C.F."/>
            <person name="Fukushima T."/>
            <person name="Furuno M."/>
            <person name="Futaki S."/>
            <person name="Gariboldi M."/>
            <person name="Georgii-Hemming P."/>
            <person name="Gingeras T.R."/>
            <person name="Gojobori T."/>
            <person name="Green R.E."/>
            <person name="Gustincich S."/>
            <person name="Harbers M."/>
            <person name="Hayashi Y."/>
            <person name="Hensch T.K."/>
            <person name="Hirokawa N."/>
            <person name="Hill D."/>
            <person name="Huminiecki L."/>
            <person name="Iacono M."/>
            <person name="Ikeo K."/>
            <person name="Iwama A."/>
            <person name="Ishikawa T."/>
            <person name="Jakt M."/>
            <person name="Kanapin A."/>
            <person name="Katoh M."/>
            <person name="Kawasawa Y."/>
            <person name="Kelso J."/>
            <person name="Kitamura H."/>
            <person name="Kitano H."/>
            <person name="Kollias G."/>
            <person name="Krishnan S.P."/>
            <person name="Kruger A."/>
            <person name="Kummerfeld S.K."/>
            <person name="Kurochkin I.V."/>
            <person name="Lareau L.F."/>
            <person name="Lazarevic D."/>
            <person name="Lipovich L."/>
            <person name="Liu J."/>
            <person name="Liuni S."/>
            <person name="McWilliam S."/>
            <person name="Madan Babu M."/>
            <person name="Madera M."/>
            <person name="Marchionni L."/>
            <person name="Matsuda H."/>
            <person name="Matsuzawa S."/>
            <person name="Miki H."/>
            <person name="Mignone F."/>
            <person name="Miyake S."/>
            <person name="Morris K."/>
            <person name="Mottagui-Tabar S."/>
            <person name="Mulder N."/>
            <person name="Nakano N."/>
            <person name="Nakauchi H."/>
            <person name="Ng P."/>
            <person name="Nilsson R."/>
            <person name="Nishiguchi S."/>
            <person name="Nishikawa S."/>
            <person name="Nori F."/>
            <person name="Ohara O."/>
            <person name="Okazaki Y."/>
            <person name="Orlando V."/>
            <person name="Pang K.C."/>
            <person name="Pavan W.J."/>
            <person name="Pavesi G."/>
            <person name="Pesole G."/>
            <person name="Petrovsky N."/>
            <person name="Piazza S."/>
            <person name="Reed J."/>
            <person name="Reid J.F."/>
            <person name="Ring B.Z."/>
            <person name="Ringwald M."/>
            <person name="Rost B."/>
            <person name="Ruan Y."/>
            <person name="Salzberg S.L."/>
            <person name="Sandelin A."/>
            <person name="Schneider C."/>
            <person name="Schoenbach C."/>
            <person name="Sekiguchi K."/>
            <person name="Semple C.A."/>
            <person name="Seno S."/>
            <person name="Sessa L."/>
            <person name="Sheng Y."/>
            <person name="Shibata Y."/>
            <person name="Shimada H."/>
            <person name="Shimada K."/>
            <person name="Silva D."/>
            <person name="Sinclair B."/>
            <person name="Sperling S."/>
            <person name="Stupka E."/>
            <person name="Sugiura K."/>
            <person name="Sultana R."/>
            <person name="Takenaka Y."/>
            <person name="Taki K."/>
            <person name="Tammoja K."/>
            <person name="Tan S.L."/>
            <person name="Tang S."/>
            <person name="Taylor M.S."/>
            <person name="Tegner J."/>
            <person name="Teichmann S.A."/>
            <person name="Ueda H.R."/>
            <person name="van Nimwegen E."/>
            <person name="Verardo R."/>
            <person name="Wei C.L."/>
            <person name="Yagi K."/>
            <person name="Yamanishi H."/>
            <person name="Zabarovsky E."/>
            <person name="Zhu S."/>
            <person name="Zimmer A."/>
            <person name="Hide W."/>
            <person name="Bult C."/>
            <person name="Grimmond S.M."/>
            <person name="Teasdale R.D."/>
            <person name="Liu E.T."/>
            <person name="Brusic V."/>
            <person name="Quackenbush J."/>
            <person name="Wahlestedt C."/>
            <person name="Mattick J.S."/>
            <person name="Hume D.A."/>
            <person name="Kai C."/>
            <person name="Sasaki D."/>
            <person name="Tomaru Y."/>
            <person name="Fukuda S."/>
            <person name="Kanamori-Katayama M."/>
            <person name="Suzuki M."/>
            <person name="Aoki J."/>
            <person name="Arakawa T."/>
            <person name="Iida J."/>
            <person name="Imamura K."/>
            <person name="Itoh M."/>
            <person name="Kato T."/>
            <person name="Kawaji H."/>
            <person name="Kawagashira N."/>
            <person name="Kawashima T."/>
            <person name="Kojima M."/>
            <person name="Kondo S."/>
            <person name="Konno H."/>
            <person name="Nakano K."/>
            <person name="Ninomiya N."/>
            <person name="Nishio T."/>
            <person name="Okada M."/>
            <person name="Plessy C."/>
            <person name="Shibata K."/>
            <person name="Shiraki T."/>
            <person name="Suzuki S."/>
            <person name="Tagami M."/>
            <person name="Waki K."/>
            <person name="Watahiki A."/>
            <person name="Okamura-Oho Y."/>
            <person name="Suzuki H."/>
            <person name="Kawai J."/>
            <person name="Hayashizaki Y."/>
        </authorList>
    </citation>
    <scope>NUCLEOTIDE SEQUENCE [LARGE SCALE MRNA]</scope>
    <source>
        <strain>C57BL/6J</strain>
        <tissue>Pancreas</tissue>
    </source>
</reference>
<reference key="5">
    <citation type="journal article" date="1998" name="Genes Dev.">
        <title>The bHLH protein PTF1-p48 protein is essential for the formation of the exocrine and the correct spatial organization of the endocrine pancreas.</title>
        <authorList>
            <person name="Krapp A."/>
            <person name="Knoefler M."/>
            <person name="Ledermann B."/>
            <person name="Buerki K."/>
            <person name="Berney C."/>
            <person name="Zoerkler N."/>
            <person name="Hagenbuechle O."/>
            <person name="Wellauer P.K."/>
        </authorList>
    </citation>
    <scope>FUNCTION IN PANCREAS DEVELOPMENT</scope>
    <scope>TISSUE SPECIFICITY</scope>
    <scope>DISRUPTION PHENOTYPE</scope>
    <source>
        <strain>129/SvJ</strain>
    </source>
</reference>
<reference key="6">
    <citation type="journal article" date="2002" name="Nat. Genet.">
        <title>The role of the transcriptional regulator Ptf1a in converting intestinal to pancreatic progenitors.</title>
        <authorList>
            <person name="Kawaguchi Y."/>
            <person name="Cooper B."/>
            <person name="Gannon M."/>
            <person name="Ray M."/>
            <person name="MacDonald R.J."/>
            <person name="Wright C.V."/>
        </authorList>
    </citation>
    <scope>FUNCTION IN PANCREAS DEVELOPMENT</scope>
    <scope>DEVELOPMENTAL STAGE</scope>
</reference>
<reference key="7">
    <citation type="journal article" date="2004" name="Nat. Genet.">
        <title>Mutations in PTF1A cause pancreatic and cerebellar agenesis.</title>
        <authorList>
            <person name="Sellick G.S."/>
            <person name="Barker K.T."/>
            <person name="Stolte-Dijkstra I."/>
            <person name="Fleischmann C."/>
            <person name="Coleman R.J."/>
            <person name="Garrett C."/>
            <person name="Gloyn A.L."/>
            <person name="Edghill E.L."/>
            <person name="Hattersley A.T."/>
            <person name="Wellauer P.K."/>
            <person name="Goodwin G."/>
            <person name="Houlston R.S."/>
        </authorList>
    </citation>
    <scope>FUNCTION IN PANCREAS AND CEREBELLAR DEVELOPMENT</scope>
    <scope>DISRUPTION PHENOTYPE</scope>
    <scope>DEVELOPMENTAL STAGE</scope>
</reference>
<reference key="8">
    <citation type="journal article" date="2006" name="Development">
        <title>Ptf1a determines horizontal and amacrine cell fates during mouse retinal development.</title>
        <authorList>
            <person name="Fujitani Y."/>
            <person name="Fujitani S."/>
            <person name="Luo H."/>
            <person name="Qiu F."/>
            <person name="Burlison J."/>
            <person name="Long Q."/>
            <person name="Kawaguchi Y."/>
            <person name="Edlund H."/>
            <person name="MacDonald R.J."/>
            <person name="Furukawa T."/>
            <person name="Fujikado T."/>
            <person name="Magnuson M.A."/>
            <person name="Xiang M."/>
            <person name="Wright C.V."/>
        </authorList>
    </citation>
    <scope>FUNCTION IN RETINA DEVELOPMENT</scope>
    <scope>DEVELOPMENTAL STAGE</scope>
    <scope>DISRUPTION PHENOTYPE</scope>
</reference>
<reference key="9">
    <citation type="journal article" date="2010" name="Cell">
        <title>A tissue-specific atlas of mouse protein phosphorylation and expression.</title>
        <authorList>
            <person name="Huttlin E.L."/>
            <person name="Jedrychowski M.P."/>
            <person name="Elias J.E."/>
            <person name="Goswami T."/>
            <person name="Rad R."/>
            <person name="Beausoleil S.A."/>
            <person name="Villen J."/>
            <person name="Haas W."/>
            <person name="Sowa M.E."/>
            <person name="Gygi S.P."/>
        </authorList>
    </citation>
    <scope>IDENTIFICATION BY MASS SPECTROMETRY [LARGE SCALE ANALYSIS]</scope>
    <source>
        <tissue>Pancreas</tissue>
    </source>
</reference>
<reference key="10">
    <citation type="journal article" date="2011" name="Genes Dev.">
        <title>LRH-1 and PTF1-L coregulate an exocrine pancreas-specific transcriptional network for digestive function.</title>
        <authorList>
            <person name="Holmstrom S.R."/>
            <person name="Deering T."/>
            <person name="Swift G.H."/>
            <person name="Poelwijk F.J."/>
            <person name="Mangelsdorf D.J."/>
            <person name="Kliewer S.A."/>
            <person name="MacDonald R.J."/>
        </authorList>
    </citation>
    <scope>FUNCTION</scope>
</reference>
<keyword id="KW-0963">Cytoplasm</keyword>
<keyword id="KW-0217">Developmental protein</keyword>
<keyword id="KW-0221">Differentiation</keyword>
<keyword id="KW-0238">DNA-binding</keyword>
<keyword id="KW-0524">Neurogenesis</keyword>
<keyword id="KW-0539">Nucleus</keyword>
<keyword id="KW-1185">Reference proteome</keyword>
<keyword id="KW-0804">Transcription</keyword>
<keyword id="KW-0805">Transcription regulation</keyword>
<feature type="chain" id="PRO_0000233144" description="Pancreas transcription factor 1 subunit alpha">
    <location>
        <begin position="1"/>
        <end position="324"/>
    </location>
</feature>
<feature type="domain" description="bHLH" evidence="1">
    <location>
        <begin position="160"/>
        <end position="212"/>
    </location>
</feature>
<feature type="region of interest" description="Disordered" evidence="2">
    <location>
        <begin position="302"/>
        <end position="324"/>
    </location>
</feature>
<feature type="sequence conflict" description="In Ref. 1; BAA88247." evidence="10" ref="1">
    <original>E</original>
    <variation>K</variation>
    <location>
        <position position="7"/>
    </location>
</feature>
<feature type="sequence conflict" description="In Ref. 1; BAA88247." evidence="10" ref="1">
    <original>G</original>
    <variation>R</variation>
    <location>
        <position position="11"/>
    </location>
</feature>
<feature type="sequence conflict" description="In Ref. 1; BAA88247." evidence="10" ref="1">
    <original>R</original>
    <variation>H</variation>
    <location>
        <position position="223"/>
    </location>
</feature>